<keyword id="KW-0143">Chaperone</keyword>
<keyword id="KW-0963">Cytoplasm</keyword>
<keyword id="KW-0533">Nickel</keyword>
<keyword id="KW-0996">Nickel insertion</keyword>
<keyword id="KW-1185">Reference proteome</keyword>
<feature type="chain" id="PRO_0000067632" description="Urease accessory protein UreE">
    <location>
        <begin position="1"/>
        <end position="185"/>
    </location>
</feature>
<feature type="region of interest" description="Disordered" evidence="2">
    <location>
        <begin position="153"/>
        <end position="185"/>
    </location>
</feature>
<feature type="compositionally biased region" description="Basic residues" evidence="2">
    <location>
        <begin position="162"/>
        <end position="175"/>
    </location>
</feature>
<feature type="compositionally biased region" description="Basic and acidic residues" evidence="2">
    <location>
        <begin position="176"/>
        <end position="185"/>
    </location>
</feature>
<organism>
    <name type="scientific">Haemophilus influenzae (strain ATCC 51907 / DSM 11121 / KW20 / Rd)</name>
    <dbReference type="NCBI Taxonomy" id="71421"/>
    <lineage>
        <taxon>Bacteria</taxon>
        <taxon>Pseudomonadati</taxon>
        <taxon>Pseudomonadota</taxon>
        <taxon>Gammaproteobacteria</taxon>
        <taxon>Pasteurellales</taxon>
        <taxon>Pasteurellaceae</taxon>
        <taxon>Haemophilus</taxon>
    </lineage>
</organism>
<accession>P44394</accession>
<dbReference type="EMBL" id="L42023">
    <property type="protein sequence ID" value="AAC22196.1"/>
    <property type="molecule type" value="Genomic_DNA"/>
</dbReference>
<dbReference type="PIR" id="G64075">
    <property type="entry name" value="G64075"/>
</dbReference>
<dbReference type="RefSeq" id="NP_438696.1">
    <property type="nucleotide sequence ID" value="NC_000907.1"/>
</dbReference>
<dbReference type="SMR" id="P44394"/>
<dbReference type="STRING" id="71421.HI_0538"/>
<dbReference type="EnsemblBacteria" id="AAC22196">
    <property type="protein sequence ID" value="AAC22196"/>
    <property type="gene ID" value="HI_0538"/>
</dbReference>
<dbReference type="KEGG" id="hin:HI_0538"/>
<dbReference type="PATRIC" id="fig|71421.8.peg.557"/>
<dbReference type="eggNOG" id="COG2371">
    <property type="taxonomic scope" value="Bacteria"/>
</dbReference>
<dbReference type="HOGENOM" id="CLU_093757_3_0_6"/>
<dbReference type="OrthoDB" id="5421304at2"/>
<dbReference type="PhylomeDB" id="P44394"/>
<dbReference type="BioCyc" id="HINF71421:G1GJ1-551-MONOMER"/>
<dbReference type="Proteomes" id="UP000000579">
    <property type="component" value="Chromosome"/>
</dbReference>
<dbReference type="GO" id="GO:0005737">
    <property type="term" value="C:cytoplasm"/>
    <property type="evidence" value="ECO:0007669"/>
    <property type="project" value="UniProtKB-SubCell"/>
</dbReference>
<dbReference type="GO" id="GO:0016151">
    <property type="term" value="F:nickel cation binding"/>
    <property type="evidence" value="ECO:0007669"/>
    <property type="project" value="UniProtKB-UniRule"/>
</dbReference>
<dbReference type="GO" id="GO:0051082">
    <property type="term" value="F:unfolded protein binding"/>
    <property type="evidence" value="ECO:0007669"/>
    <property type="project" value="UniProtKB-UniRule"/>
</dbReference>
<dbReference type="GO" id="GO:0006457">
    <property type="term" value="P:protein folding"/>
    <property type="evidence" value="ECO:0007669"/>
    <property type="project" value="InterPro"/>
</dbReference>
<dbReference type="GO" id="GO:0065003">
    <property type="term" value="P:protein-containing complex assembly"/>
    <property type="evidence" value="ECO:0007669"/>
    <property type="project" value="InterPro"/>
</dbReference>
<dbReference type="GO" id="GO:0019627">
    <property type="term" value="P:urea metabolic process"/>
    <property type="evidence" value="ECO:0007669"/>
    <property type="project" value="InterPro"/>
</dbReference>
<dbReference type="CDD" id="cd00571">
    <property type="entry name" value="UreE"/>
    <property type="match status" value="1"/>
</dbReference>
<dbReference type="Gene3D" id="2.60.260.20">
    <property type="entry name" value="Urease metallochaperone UreE, N-terminal domain"/>
    <property type="match status" value="1"/>
</dbReference>
<dbReference type="Gene3D" id="3.30.70.790">
    <property type="entry name" value="UreE, C-terminal domain"/>
    <property type="match status" value="1"/>
</dbReference>
<dbReference type="HAMAP" id="MF_00822">
    <property type="entry name" value="UreE"/>
    <property type="match status" value="1"/>
</dbReference>
<dbReference type="InterPro" id="IPR012406">
    <property type="entry name" value="UreE"/>
</dbReference>
<dbReference type="InterPro" id="IPR007864">
    <property type="entry name" value="UreE_C_dom"/>
</dbReference>
<dbReference type="InterPro" id="IPR004029">
    <property type="entry name" value="UreE_N"/>
</dbReference>
<dbReference type="InterPro" id="IPR036118">
    <property type="entry name" value="UreE_N_sf"/>
</dbReference>
<dbReference type="NCBIfam" id="NF009754">
    <property type="entry name" value="PRK13261.1-6"/>
    <property type="match status" value="1"/>
</dbReference>
<dbReference type="Pfam" id="PF05194">
    <property type="entry name" value="UreE_C"/>
    <property type="match status" value="1"/>
</dbReference>
<dbReference type="Pfam" id="PF02814">
    <property type="entry name" value="UreE_N"/>
    <property type="match status" value="1"/>
</dbReference>
<dbReference type="PIRSF" id="PIRSF036402">
    <property type="entry name" value="Ureas_acces_UreE"/>
    <property type="match status" value="1"/>
</dbReference>
<dbReference type="SMART" id="SM00988">
    <property type="entry name" value="UreE_N"/>
    <property type="match status" value="1"/>
</dbReference>
<dbReference type="SUPFAM" id="SSF69737">
    <property type="entry name" value="Urease metallochaperone UreE, C-terminal domain"/>
    <property type="match status" value="1"/>
</dbReference>
<dbReference type="SUPFAM" id="SSF69287">
    <property type="entry name" value="Urease metallochaperone UreE, N-terminal domain"/>
    <property type="match status" value="1"/>
</dbReference>
<sequence>MKIINPILPIIENILGNLTALQAEGKITTQPIERVALQWYESERNILRKTTNTGREVAFRLLKEGQRLKHDDVVFISDELVIAIEILPSDVIVLSPKTLPEMARACYEIGNKHSPLFLDGDEVTLPYDKPMFEWLQAAGFHPQKAERRLSQALRANSAQGHGHSHSHSHDHHGYHHHGDGHWHKH</sequence>
<comment type="function">
    <text evidence="1">Involved in urease metallocenter assembly. Binds nickel. Probably functions as a nickel donor during metallocenter assembly.</text>
</comment>
<comment type="subcellular location">
    <subcellularLocation>
        <location evidence="1">Cytoplasm</location>
    </subcellularLocation>
</comment>
<comment type="similarity">
    <text evidence="1">Belongs to the UreE family.</text>
</comment>
<reference key="1">
    <citation type="journal article" date="1995" name="Science">
        <title>Whole-genome random sequencing and assembly of Haemophilus influenzae Rd.</title>
        <authorList>
            <person name="Fleischmann R.D."/>
            <person name="Adams M.D."/>
            <person name="White O."/>
            <person name="Clayton R.A."/>
            <person name="Kirkness E.F."/>
            <person name="Kerlavage A.R."/>
            <person name="Bult C.J."/>
            <person name="Tomb J.-F."/>
            <person name="Dougherty B.A."/>
            <person name="Merrick J.M."/>
            <person name="McKenney K."/>
            <person name="Sutton G.G."/>
            <person name="FitzHugh W."/>
            <person name="Fields C.A."/>
            <person name="Gocayne J.D."/>
            <person name="Scott J.D."/>
            <person name="Shirley R."/>
            <person name="Liu L.-I."/>
            <person name="Glodek A."/>
            <person name="Kelley J.M."/>
            <person name="Weidman J.F."/>
            <person name="Phillips C.A."/>
            <person name="Spriggs T."/>
            <person name="Hedblom E."/>
            <person name="Cotton M.D."/>
            <person name="Utterback T.R."/>
            <person name="Hanna M.C."/>
            <person name="Nguyen D.T."/>
            <person name="Saudek D.M."/>
            <person name="Brandon R.C."/>
            <person name="Fine L.D."/>
            <person name="Fritchman J.L."/>
            <person name="Fuhrmann J.L."/>
            <person name="Geoghagen N.S.M."/>
            <person name="Gnehm C.L."/>
            <person name="McDonald L.A."/>
            <person name="Small K.V."/>
            <person name="Fraser C.M."/>
            <person name="Smith H.O."/>
            <person name="Venter J.C."/>
        </authorList>
    </citation>
    <scope>NUCLEOTIDE SEQUENCE [LARGE SCALE GENOMIC DNA]</scope>
    <source>
        <strain>ATCC 51907 / DSM 11121 / KW20 / Rd</strain>
    </source>
</reference>
<evidence type="ECO:0000255" key="1">
    <source>
        <dbReference type="HAMAP-Rule" id="MF_00822"/>
    </source>
</evidence>
<evidence type="ECO:0000256" key="2">
    <source>
        <dbReference type="SAM" id="MobiDB-lite"/>
    </source>
</evidence>
<proteinExistence type="inferred from homology"/>
<protein>
    <recommendedName>
        <fullName evidence="1">Urease accessory protein UreE</fullName>
    </recommendedName>
</protein>
<gene>
    <name evidence="1" type="primary">ureE</name>
    <name type="ordered locus">HI_0538</name>
</gene>
<name>UREE_HAEIN</name>